<accession>Q18C32</accession>
<protein>
    <recommendedName>
        <fullName evidence="1">3-methyl-2-oxobutanoate hydroxymethyltransferase</fullName>
        <ecNumber evidence="1">2.1.2.11</ecNumber>
    </recommendedName>
    <alternativeName>
        <fullName evidence="1">Ketopantoate hydroxymethyltransferase</fullName>
        <shortName evidence="1">KPHMT</shortName>
    </alternativeName>
</protein>
<proteinExistence type="inferred from homology"/>
<name>PANB_CLOD6</name>
<organism>
    <name type="scientific">Clostridioides difficile (strain 630)</name>
    <name type="common">Peptoclostridium difficile</name>
    <dbReference type="NCBI Taxonomy" id="272563"/>
    <lineage>
        <taxon>Bacteria</taxon>
        <taxon>Bacillati</taxon>
        <taxon>Bacillota</taxon>
        <taxon>Clostridia</taxon>
        <taxon>Peptostreptococcales</taxon>
        <taxon>Peptostreptococcaceae</taxon>
        <taxon>Clostridioides</taxon>
    </lineage>
</organism>
<gene>
    <name evidence="1" type="primary">panB</name>
    <name type="ordered locus">CD630_15130</name>
</gene>
<keyword id="KW-0963">Cytoplasm</keyword>
<keyword id="KW-0460">Magnesium</keyword>
<keyword id="KW-0479">Metal-binding</keyword>
<keyword id="KW-0566">Pantothenate biosynthesis</keyword>
<keyword id="KW-1185">Reference proteome</keyword>
<keyword id="KW-0808">Transferase</keyword>
<feature type="chain" id="PRO_0000297246" description="3-methyl-2-oxobutanoate hydroxymethyltransferase">
    <location>
        <begin position="1"/>
        <end position="275"/>
    </location>
</feature>
<feature type="active site" description="Proton acceptor" evidence="1">
    <location>
        <position position="182"/>
    </location>
</feature>
<feature type="binding site" evidence="1">
    <location>
        <begin position="44"/>
        <end position="45"/>
    </location>
    <ligand>
        <name>3-methyl-2-oxobutanoate</name>
        <dbReference type="ChEBI" id="CHEBI:11851"/>
    </ligand>
</feature>
<feature type="binding site" evidence="1">
    <location>
        <position position="44"/>
    </location>
    <ligand>
        <name>Mg(2+)</name>
        <dbReference type="ChEBI" id="CHEBI:18420"/>
    </ligand>
</feature>
<feature type="binding site" evidence="1">
    <location>
        <position position="83"/>
    </location>
    <ligand>
        <name>3-methyl-2-oxobutanoate</name>
        <dbReference type="ChEBI" id="CHEBI:11851"/>
    </ligand>
</feature>
<feature type="binding site" evidence="1">
    <location>
        <position position="83"/>
    </location>
    <ligand>
        <name>Mg(2+)</name>
        <dbReference type="ChEBI" id="CHEBI:18420"/>
    </ligand>
</feature>
<feature type="binding site" evidence="1">
    <location>
        <position position="113"/>
    </location>
    <ligand>
        <name>3-methyl-2-oxobutanoate</name>
        <dbReference type="ChEBI" id="CHEBI:11851"/>
    </ligand>
</feature>
<feature type="binding site" evidence="1">
    <location>
        <position position="115"/>
    </location>
    <ligand>
        <name>Mg(2+)</name>
        <dbReference type="ChEBI" id="CHEBI:18420"/>
    </ligand>
</feature>
<comment type="function">
    <text evidence="1">Catalyzes the reversible reaction in which hydroxymethyl group from 5,10-methylenetetrahydrofolate is transferred onto alpha-ketoisovalerate to form ketopantoate.</text>
</comment>
<comment type="catalytic activity">
    <reaction evidence="1">
        <text>3-methyl-2-oxobutanoate + (6R)-5,10-methylene-5,6,7,8-tetrahydrofolate + H2O = 2-dehydropantoate + (6S)-5,6,7,8-tetrahydrofolate</text>
        <dbReference type="Rhea" id="RHEA:11824"/>
        <dbReference type="ChEBI" id="CHEBI:11561"/>
        <dbReference type="ChEBI" id="CHEBI:11851"/>
        <dbReference type="ChEBI" id="CHEBI:15377"/>
        <dbReference type="ChEBI" id="CHEBI:15636"/>
        <dbReference type="ChEBI" id="CHEBI:57453"/>
        <dbReference type="EC" id="2.1.2.11"/>
    </reaction>
</comment>
<comment type="cofactor">
    <cofactor evidence="1">
        <name>Mg(2+)</name>
        <dbReference type="ChEBI" id="CHEBI:18420"/>
    </cofactor>
    <text evidence="1">Binds 1 Mg(2+) ion per subunit.</text>
</comment>
<comment type="pathway">
    <text evidence="1">Cofactor biosynthesis; (R)-pantothenate biosynthesis; (R)-pantoate from 3-methyl-2-oxobutanoate: step 1/2.</text>
</comment>
<comment type="subunit">
    <text evidence="1">Homodecamer; pentamer of dimers.</text>
</comment>
<comment type="subcellular location">
    <subcellularLocation>
        <location evidence="1">Cytoplasm</location>
    </subcellularLocation>
</comment>
<comment type="similarity">
    <text evidence="1">Belongs to the PanB family.</text>
</comment>
<evidence type="ECO:0000255" key="1">
    <source>
        <dbReference type="HAMAP-Rule" id="MF_00156"/>
    </source>
</evidence>
<sequence length="275" mass="29886">MKNTIQTFKNAKYEGKKLSMLTAYDYSIAKIMDECDINGILIGDSLGMVIKGEENTLSVTIDEIIYHTKAVKNGVKNALIVSDMPFLSYHVSIEDAVKNAGRLIKEGGAHAVKLEGGSNVIKQIESIVNAQIPVMGHLGLTPQSVNSFGGFKVQGNTSETARQLIEDAKLIEKAGAFSIVLEGVPTKIAEMVTNSISIPTIGIGAGINCDGQILVYQDMLGMFGDFVPKFVKQYANIGDIMKDSIKNYILEVNTGAFPQEKHSFSINESELEKLY</sequence>
<reference key="1">
    <citation type="journal article" date="2006" name="Nat. Genet.">
        <title>The multidrug-resistant human pathogen Clostridium difficile has a highly mobile, mosaic genome.</title>
        <authorList>
            <person name="Sebaihia M."/>
            <person name="Wren B.W."/>
            <person name="Mullany P."/>
            <person name="Fairweather N.F."/>
            <person name="Minton N."/>
            <person name="Stabler R."/>
            <person name="Thomson N.R."/>
            <person name="Roberts A.P."/>
            <person name="Cerdeno-Tarraga A.M."/>
            <person name="Wang H."/>
            <person name="Holden M.T.G."/>
            <person name="Wright A."/>
            <person name="Churcher C."/>
            <person name="Quail M.A."/>
            <person name="Baker S."/>
            <person name="Bason N."/>
            <person name="Brooks K."/>
            <person name="Chillingworth T."/>
            <person name="Cronin A."/>
            <person name="Davis P."/>
            <person name="Dowd L."/>
            <person name="Fraser A."/>
            <person name="Feltwell T."/>
            <person name="Hance Z."/>
            <person name="Holroyd S."/>
            <person name="Jagels K."/>
            <person name="Moule S."/>
            <person name="Mungall K."/>
            <person name="Price C."/>
            <person name="Rabbinowitsch E."/>
            <person name="Sharp S."/>
            <person name="Simmonds M."/>
            <person name="Stevens K."/>
            <person name="Unwin L."/>
            <person name="Whithead S."/>
            <person name="Dupuy B."/>
            <person name="Dougan G."/>
            <person name="Barrell B."/>
            <person name="Parkhill J."/>
        </authorList>
    </citation>
    <scope>NUCLEOTIDE SEQUENCE [LARGE SCALE GENOMIC DNA]</scope>
    <source>
        <strain>630</strain>
    </source>
</reference>
<dbReference type="EC" id="2.1.2.11" evidence="1"/>
<dbReference type="EMBL" id="AM180355">
    <property type="protein sequence ID" value="CAJ68378.1"/>
    <property type="molecule type" value="Genomic_DNA"/>
</dbReference>
<dbReference type="RefSeq" id="WP_003439367.1">
    <property type="nucleotide sequence ID" value="NZ_JAUPES010000019.1"/>
</dbReference>
<dbReference type="RefSeq" id="YP_001088014.1">
    <property type="nucleotide sequence ID" value="NC_009089.1"/>
</dbReference>
<dbReference type="SMR" id="Q18C32"/>
<dbReference type="STRING" id="272563.CD630_15130"/>
<dbReference type="EnsemblBacteria" id="CAJ68378">
    <property type="protein sequence ID" value="CAJ68378"/>
    <property type="gene ID" value="CD630_15130"/>
</dbReference>
<dbReference type="KEGG" id="cdf:CD630_15130"/>
<dbReference type="KEGG" id="pdc:CDIF630_01679"/>
<dbReference type="PATRIC" id="fig|272563.120.peg.1584"/>
<dbReference type="eggNOG" id="COG0413">
    <property type="taxonomic scope" value="Bacteria"/>
</dbReference>
<dbReference type="OrthoDB" id="9781789at2"/>
<dbReference type="PhylomeDB" id="Q18C32"/>
<dbReference type="BioCyc" id="PDIF272563:G12WB-1650-MONOMER"/>
<dbReference type="UniPathway" id="UPA00028">
    <property type="reaction ID" value="UER00003"/>
</dbReference>
<dbReference type="Proteomes" id="UP000001978">
    <property type="component" value="Chromosome"/>
</dbReference>
<dbReference type="GO" id="GO:0005737">
    <property type="term" value="C:cytoplasm"/>
    <property type="evidence" value="ECO:0007669"/>
    <property type="project" value="UniProtKB-SubCell"/>
</dbReference>
<dbReference type="GO" id="GO:0003864">
    <property type="term" value="F:3-methyl-2-oxobutanoate hydroxymethyltransferase activity"/>
    <property type="evidence" value="ECO:0007669"/>
    <property type="project" value="UniProtKB-UniRule"/>
</dbReference>
<dbReference type="GO" id="GO:0000287">
    <property type="term" value="F:magnesium ion binding"/>
    <property type="evidence" value="ECO:0007669"/>
    <property type="project" value="TreeGrafter"/>
</dbReference>
<dbReference type="GO" id="GO:0015940">
    <property type="term" value="P:pantothenate biosynthetic process"/>
    <property type="evidence" value="ECO:0007669"/>
    <property type="project" value="UniProtKB-UniRule"/>
</dbReference>
<dbReference type="CDD" id="cd06557">
    <property type="entry name" value="KPHMT-like"/>
    <property type="match status" value="1"/>
</dbReference>
<dbReference type="FunFam" id="3.20.20.60:FF:000003">
    <property type="entry name" value="3-methyl-2-oxobutanoate hydroxymethyltransferase"/>
    <property type="match status" value="1"/>
</dbReference>
<dbReference type="Gene3D" id="3.20.20.60">
    <property type="entry name" value="Phosphoenolpyruvate-binding domains"/>
    <property type="match status" value="1"/>
</dbReference>
<dbReference type="HAMAP" id="MF_00156">
    <property type="entry name" value="PanB"/>
    <property type="match status" value="1"/>
</dbReference>
<dbReference type="InterPro" id="IPR003700">
    <property type="entry name" value="Pantoate_hydroxy_MeTrfase"/>
</dbReference>
<dbReference type="InterPro" id="IPR015813">
    <property type="entry name" value="Pyrv/PenolPyrv_kinase-like_dom"/>
</dbReference>
<dbReference type="InterPro" id="IPR040442">
    <property type="entry name" value="Pyrv_kinase-like_dom_sf"/>
</dbReference>
<dbReference type="NCBIfam" id="TIGR00222">
    <property type="entry name" value="panB"/>
    <property type="match status" value="1"/>
</dbReference>
<dbReference type="NCBIfam" id="NF001452">
    <property type="entry name" value="PRK00311.1"/>
    <property type="match status" value="1"/>
</dbReference>
<dbReference type="PANTHER" id="PTHR20881">
    <property type="entry name" value="3-METHYL-2-OXOBUTANOATE HYDROXYMETHYLTRANSFERASE"/>
    <property type="match status" value="1"/>
</dbReference>
<dbReference type="PANTHER" id="PTHR20881:SF0">
    <property type="entry name" value="3-METHYL-2-OXOBUTANOATE HYDROXYMETHYLTRANSFERASE"/>
    <property type="match status" value="1"/>
</dbReference>
<dbReference type="Pfam" id="PF02548">
    <property type="entry name" value="Pantoate_transf"/>
    <property type="match status" value="1"/>
</dbReference>
<dbReference type="PIRSF" id="PIRSF000388">
    <property type="entry name" value="Pantoate_hydroxy_MeTrfase"/>
    <property type="match status" value="1"/>
</dbReference>
<dbReference type="SUPFAM" id="SSF51621">
    <property type="entry name" value="Phosphoenolpyruvate/pyruvate domain"/>
    <property type="match status" value="1"/>
</dbReference>